<organism>
    <name type="scientific">Legionella pneumophila subsp. pneumophila (strain Philadelphia 1 / ATCC 33152 / DSM 7513)</name>
    <dbReference type="NCBI Taxonomy" id="272624"/>
    <lineage>
        <taxon>Bacteria</taxon>
        <taxon>Pseudomonadati</taxon>
        <taxon>Pseudomonadota</taxon>
        <taxon>Gammaproteobacteria</taxon>
        <taxon>Legionellales</taxon>
        <taxon>Legionellaceae</taxon>
        <taxon>Legionella</taxon>
    </lineage>
</organism>
<proteinExistence type="inferred from homology"/>
<accession>Q5ZYF8</accession>
<evidence type="ECO:0000255" key="1">
    <source>
        <dbReference type="HAMAP-Rule" id="MF_01552"/>
    </source>
</evidence>
<keyword id="KW-0067">ATP-binding</keyword>
<keyword id="KW-0436">Ligase</keyword>
<keyword id="KW-0460">Magnesium</keyword>
<keyword id="KW-0464">Manganese</keyword>
<keyword id="KW-0479">Metal-binding</keyword>
<keyword id="KW-0547">Nucleotide-binding</keyword>
<keyword id="KW-0648">Protein biosynthesis</keyword>
<keyword id="KW-1185">Reference proteome</keyword>
<comment type="cofactor">
    <cofactor evidence="1">
        <name>Mg(2+)</name>
        <dbReference type="ChEBI" id="CHEBI:18420"/>
    </cofactor>
    <cofactor evidence="1">
        <name>Mn(2+)</name>
        <dbReference type="ChEBI" id="CHEBI:29035"/>
    </cofactor>
    <text evidence="1">Binds 2 magnesium or manganese ions per subunit.</text>
</comment>
<comment type="similarity">
    <text evidence="1">Belongs to the RimK family.</text>
</comment>
<feature type="chain" id="PRO_0000205464" description="Probable alpha-L-glutamate ligase">
    <location>
        <begin position="1"/>
        <end position="302"/>
    </location>
</feature>
<feature type="domain" description="ATP-grasp" evidence="1">
    <location>
        <begin position="105"/>
        <end position="288"/>
    </location>
</feature>
<feature type="binding site" evidence="1">
    <location>
        <position position="142"/>
    </location>
    <ligand>
        <name>ATP</name>
        <dbReference type="ChEBI" id="CHEBI:30616"/>
    </ligand>
</feature>
<feature type="binding site" evidence="1">
    <location>
        <begin position="179"/>
        <end position="180"/>
    </location>
    <ligand>
        <name>ATP</name>
        <dbReference type="ChEBI" id="CHEBI:30616"/>
    </ligand>
</feature>
<feature type="binding site" evidence="1">
    <location>
        <position position="188"/>
    </location>
    <ligand>
        <name>ATP</name>
        <dbReference type="ChEBI" id="CHEBI:30616"/>
    </ligand>
</feature>
<feature type="binding site" evidence="1">
    <location>
        <begin position="212"/>
        <end position="214"/>
    </location>
    <ligand>
        <name>ATP</name>
        <dbReference type="ChEBI" id="CHEBI:30616"/>
    </ligand>
</feature>
<feature type="binding site" evidence="1">
    <location>
        <position position="249"/>
    </location>
    <ligand>
        <name>Mg(2+)</name>
        <dbReference type="ChEBI" id="CHEBI:18420"/>
        <label>1</label>
    </ligand>
</feature>
<feature type="binding site" evidence="1">
    <location>
        <position position="249"/>
    </location>
    <ligand>
        <name>Mn(2+)</name>
        <dbReference type="ChEBI" id="CHEBI:29035"/>
        <label>1</label>
    </ligand>
</feature>
<feature type="binding site" evidence="1">
    <location>
        <position position="261"/>
    </location>
    <ligand>
        <name>Mg(2+)</name>
        <dbReference type="ChEBI" id="CHEBI:18420"/>
        <label>1</label>
    </ligand>
</feature>
<feature type="binding site" evidence="1">
    <location>
        <position position="261"/>
    </location>
    <ligand>
        <name>Mg(2+)</name>
        <dbReference type="ChEBI" id="CHEBI:18420"/>
        <label>2</label>
    </ligand>
</feature>
<feature type="binding site" evidence="1">
    <location>
        <position position="261"/>
    </location>
    <ligand>
        <name>Mn(2+)</name>
        <dbReference type="ChEBI" id="CHEBI:29035"/>
        <label>1</label>
    </ligand>
</feature>
<feature type="binding site" evidence="1">
    <location>
        <position position="261"/>
    </location>
    <ligand>
        <name>Mn(2+)</name>
        <dbReference type="ChEBI" id="CHEBI:29035"/>
        <label>2</label>
    </ligand>
</feature>
<feature type="binding site" evidence="1">
    <location>
        <position position="263"/>
    </location>
    <ligand>
        <name>Mg(2+)</name>
        <dbReference type="ChEBI" id="CHEBI:18420"/>
        <label>2</label>
    </ligand>
</feature>
<feature type="binding site" evidence="1">
    <location>
        <position position="263"/>
    </location>
    <ligand>
        <name>Mn(2+)</name>
        <dbReference type="ChEBI" id="CHEBI:29035"/>
        <label>2</label>
    </ligand>
</feature>
<dbReference type="EC" id="6.3.2.-" evidence="1"/>
<dbReference type="EMBL" id="AE017354">
    <property type="protein sequence ID" value="AAU26511.1"/>
    <property type="molecule type" value="Genomic_DNA"/>
</dbReference>
<dbReference type="RefSeq" id="WP_010946163.1">
    <property type="nucleotide sequence ID" value="NC_002942.5"/>
</dbReference>
<dbReference type="RefSeq" id="YP_094458.1">
    <property type="nucleotide sequence ID" value="NC_002942.5"/>
</dbReference>
<dbReference type="SMR" id="Q5ZYF8"/>
<dbReference type="STRING" id="272624.lpg0414"/>
<dbReference type="PaxDb" id="272624-lpg0414"/>
<dbReference type="GeneID" id="57034418"/>
<dbReference type="KEGG" id="lpn:lpg0414"/>
<dbReference type="PATRIC" id="fig|272624.6.peg.430"/>
<dbReference type="eggNOG" id="COG0189">
    <property type="taxonomic scope" value="Bacteria"/>
</dbReference>
<dbReference type="HOGENOM" id="CLU_054353_0_1_6"/>
<dbReference type="OrthoDB" id="3865600at2"/>
<dbReference type="Proteomes" id="UP000000609">
    <property type="component" value="Chromosome"/>
</dbReference>
<dbReference type="GO" id="GO:0005737">
    <property type="term" value="C:cytoplasm"/>
    <property type="evidence" value="ECO:0007669"/>
    <property type="project" value="TreeGrafter"/>
</dbReference>
<dbReference type="GO" id="GO:0005524">
    <property type="term" value="F:ATP binding"/>
    <property type="evidence" value="ECO:0007669"/>
    <property type="project" value="UniProtKB-UniRule"/>
</dbReference>
<dbReference type="GO" id="GO:0046872">
    <property type="term" value="F:metal ion binding"/>
    <property type="evidence" value="ECO:0007669"/>
    <property type="project" value="UniProtKB-KW"/>
</dbReference>
<dbReference type="GO" id="GO:0018169">
    <property type="term" value="F:ribosomal S6-glutamic acid ligase activity"/>
    <property type="evidence" value="ECO:0007669"/>
    <property type="project" value="TreeGrafter"/>
</dbReference>
<dbReference type="GO" id="GO:0036211">
    <property type="term" value="P:protein modification process"/>
    <property type="evidence" value="ECO:0007669"/>
    <property type="project" value="InterPro"/>
</dbReference>
<dbReference type="GO" id="GO:0009432">
    <property type="term" value="P:SOS response"/>
    <property type="evidence" value="ECO:0007669"/>
    <property type="project" value="TreeGrafter"/>
</dbReference>
<dbReference type="GO" id="GO:0006412">
    <property type="term" value="P:translation"/>
    <property type="evidence" value="ECO:0007669"/>
    <property type="project" value="UniProtKB-KW"/>
</dbReference>
<dbReference type="FunFam" id="3.30.470.20:FF:000058">
    <property type="entry name" value="Alpha-aminoadipate--LysW ligase LysX protein"/>
    <property type="match status" value="1"/>
</dbReference>
<dbReference type="FunFam" id="3.30.1490.20:FF:000005">
    <property type="entry name" value="Probable alpha-L-glutamate ligase 1"/>
    <property type="match status" value="1"/>
</dbReference>
<dbReference type="Gene3D" id="3.40.50.20">
    <property type="match status" value="1"/>
</dbReference>
<dbReference type="Gene3D" id="3.30.1490.20">
    <property type="entry name" value="ATP-grasp fold, A domain"/>
    <property type="match status" value="1"/>
</dbReference>
<dbReference type="Gene3D" id="3.30.470.20">
    <property type="entry name" value="ATP-grasp fold, B domain"/>
    <property type="match status" value="1"/>
</dbReference>
<dbReference type="HAMAP" id="MF_01552">
    <property type="entry name" value="RimK"/>
    <property type="match status" value="1"/>
</dbReference>
<dbReference type="InterPro" id="IPR011761">
    <property type="entry name" value="ATP-grasp"/>
</dbReference>
<dbReference type="InterPro" id="IPR013651">
    <property type="entry name" value="ATP-grasp_RimK-type"/>
</dbReference>
<dbReference type="InterPro" id="IPR013815">
    <property type="entry name" value="ATP_grasp_subdomain_1"/>
</dbReference>
<dbReference type="InterPro" id="IPR023533">
    <property type="entry name" value="RimK"/>
</dbReference>
<dbReference type="InterPro" id="IPR041107">
    <property type="entry name" value="Rimk_N"/>
</dbReference>
<dbReference type="InterPro" id="IPR004666">
    <property type="entry name" value="Rp_bS6_RimK/Lys_biosynth_LsyX"/>
</dbReference>
<dbReference type="NCBIfam" id="NF007764">
    <property type="entry name" value="PRK10446.1"/>
    <property type="match status" value="1"/>
</dbReference>
<dbReference type="NCBIfam" id="TIGR00768">
    <property type="entry name" value="rimK_fam"/>
    <property type="match status" value="1"/>
</dbReference>
<dbReference type="PANTHER" id="PTHR21621:SF7">
    <property type="entry name" value="RIBOSOMAL PROTEIN BS6--L-GLUTAMATE LIGASE"/>
    <property type="match status" value="1"/>
</dbReference>
<dbReference type="PANTHER" id="PTHR21621">
    <property type="entry name" value="RIBOSOMAL PROTEIN S6 MODIFICATION PROTEIN"/>
    <property type="match status" value="1"/>
</dbReference>
<dbReference type="Pfam" id="PF08443">
    <property type="entry name" value="RimK"/>
    <property type="match status" value="1"/>
</dbReference>
<dbReference type="Pfam" id="PF18030">
    <property type="entry name" value="Rimk_N"/>
    <property type="match status" value="1"/>
</dbReference>
<dbReference type="SUPFAM" id="SSF56059">
    <property type="entry name" value="Glutathione synthetase ATP-binding domain-like"/>
    <property type="match status" value="1"/>
</dbReference>
<dbReference type="PROSITE" id="PS50975">
    <property type="entry name" value="ATP_GRASP"/>
    <property type="match status" value="1"/>
</dbReference>
<protein>
    <recommendedName>
        <fullName evidence="1">Probable alpha-L-glutamate ligase</fullName>
        <ecNumber evidence="1">6.3.2.-</ecNumber>
    </recommendedName>
</protein>
<gene>
    <name evidence="1" type="primary">rimK</name>
    <name type="ordered locus">lpg0414</name>
</gene>
<sequence>MKIAILATNPHLYSHKRLKAEAEAAGHEVKIINPLYCYMNVAASNPKVHYRGGAPLPHFDAVIPRIGASITYYGTAVLRHMETMGMYTLNESIAISRSRDKFRSLQLLARKGIPMPLTSFAQSPDDTEDLIHMVGGAPLVIKLLEGTQGKGVILADSHQSAVSIINAFKEMHANILVQEFIEESRGTDIRCFVIGEKVVAAVKRQAKDGEFRANVHQGGKAVKVKLSPQERAIAVSAAKTMGLRVAGVDLIRSNHGPLVLEINSSPGLEGIEKATNINLAGKIIEYIEKKAKPISSNHRFHG</sequence>
<reference key="1">
    <citation type="journal article" date="2004" name="Science">
        <title>The genomic sequence of the accidental pathogen Legionella pneumophila.</title>
        <authorList>
            <person name="Chien M."/>
            <person name="Morozova I."/>
            <person name="Shi S."/>
            <person name="Sheng H."/>
            <person name="Chen J."/>
            <person name="Gomez S.M."/>
            <person name="Asamani G."/>
            <person name="Hill K."/>
            <person name="Nuara J."/>
            <person name="Feder M."/>
            <person name="Rineer J."/>
            <person name="Greenberg J.J."/>
            <person name="Steshenko V."/>
            <person name="Park S.H."/>
            <person name="Zhao B."/>
            <person name="Teplitskaya E."/>
            <person name="Edwards J.R."/>
            <person name="Pampou S."/>
            <person name="Georghiou A."/>
            <person name="Chou I.-C."/>
            <person name="Iannuccilli W."/>
            <person name="Ulz M.E."/>
            <person name="Kim D.H."/>
            <person name="Geringer-Sameth A."/>
            <person name="Goldsberry C."/>
            <person name="Morozov P."/>
            <person name="Fischer S.G."/>
            <person name="Segal G."/>
            <person name="Qu X."/>
            <person name="Rzhetsky A."/>
            <person name="Zhang P."/>
            <person name="Cayanis E."/>
            <person name="De Jong P.J."/>
            <person name="Ju J."/>
            <person name="Kalachikov S."/>
            <person name="Shuman H.A."/>
            <person name="Russo J.J."/>
        </authorList>
    </citation>
    <scope>NUCLEOTIDE SEQUENCE [LARGE SCALE GENOMIC DNA]</scope>
    <source>
        <strain>Philadelphia 1 / ATCC 33152 / DSM 7513</strain>
    </source>
</reference>
<name>RIMK_LEGPH</name>